<gene>
    <name type="primary">OPG132</name>
    <name type="ORF">MPXVgp117</name>
</gene>
<accession>A0A7H0DNA4</accession>
<organism>
    <name type="scientific">Monkeypox virus</name>
    <dbReference type="NCBI Taxonomy" id="10244"/>
    <lineage>
        <taxon>Viruses</taxon>
        <taxon>Varidnaviria</taxon>
        <taxon>Bamfordvirae</taxon>
        <taxon>Nucleocytoviricota</taxon>
        <taxon>Pokkesviricetes</taxon>
        <taxon>Chitovirales</taxon>
        <taxon>Poxviridae</taxon>
        <taxon>Chordopoxvirinae</taxon>
        <taxon>Orthopoxvirus</taxon>
    </lineage>
</organism>
<dbReference type="EMBL" id="KC257461">
    <property type="protein sequence ID" value="AGF37021.1"/>
    <property type="molecule type" value="Genomic_DNA"/>
</dbReference>
<dbReference type="EMBL" id="MT903340">
    <property type="protein sequence ID" value="QNP12987.1"/>
    <property type="molecule type" value="Genomic_DNA"/>
</dbReference>
<dbReference type="RefSeq" id="NP_536544.1">
    <property type="nucleotide sequence ID" value="NC_003310.1"/>
</dbReference>
<dbReference type="RefSeq" id="YP_010377114.1">
    <property type="nucleotide sequence ID" value="NC_063383.1"/>
</dbReference>
<dbReference type="PDB" id="8IZT">
    <property type="method" value="X-ray"/>
    <property type="resolution" value="1.74 A"/>
    <property type="chains" value="A=1-121"/>
</dbReference>
<dbReference type="PDB" id="8IZU">
    <property type="method" value="X-ray"/>
    <property type="resolution" value="2.54 A"/>
    <property type="chains" value="A/B=1-137"/>
</dbReference>
<dbReference type="PDBsum" id="8IZT"/>
<dbReference type="PDBsum" id="8IZU"/>
<dbReference type="SMR" id="A0A7H0DNA4"/>
<dbReference type="GeneID" id="72551527"/>
<dbReference type="GeneID" id="929013"/>
<dbReference type="KEGG" id="vg:929013"/>
<dbReference type="Proteomes" id="UP000516359">
    <property type="component" value="Genome"/>
</dbReference>
<dbReference type="GO" id="GO:0030430">
    <property type="term" value="C:host cell cytoplasm"/>
    <property type="evidence" value="ECO:0007669"/>
    <property type="project" value="UniProtKB-SubCell"/>
</dbReference>
<dbReference type="GO" id="GO:0044423">
    <property type="term" value="C:virion component"/>
    <property type="evidence" value="ECO:0007669"/>
    <property type="project" value="UniProtKB-KW"/>
</dbReference>
<dbReference type="InterPro" id="IPR007008">
    <property type="entry name" value="Poxvirus_A6"/>
</dbReference>
<dbReference type="Pfam" id="PF04924">
    <property type="entry name" value="Pox_A6"/>
    <property type="match status" value="1"/>
</dbReference>
<keyword id="KW-0002">3D-structure</keyword>
<keyword id="KW-1035">Host cytoplasm</keyword>
<keyword id="KW-1185">Reference proteome</keyword>
<keyword id="KW-0946">Virion</keyword>
<evidence type="ECO:0000250" key="1">
    <source>
        <dbReference type="UniProtKB" id="P29192"/>
    </source>
</evidence>
<evidence type="ECO:0000305" key="2"/>
<evidence type="ECO:0007829" key="3">
    <source>
        <dbReference type="PDB" id="8IZT"/>
    </source>
</evidence>
<evidence type="ECO:0007829" key="4">
    <source>
        <dbReference type="PDB" id="8IZU"/>
    </source>
</evidence>
<name>PG132_MONPV</name>
<organismHost>
    <name type="scientific">Cynomys gunnisoni</name>
    <name type="common">Gunnison's prairie dog</name>
    <name type="synonym">Spermophilus gunnisoni</name>
    <dbReference type="NCBI Taxonomy" id="45479"/>
</organismHost>
<organismHost>
    <name type="scientific">Cynomys leucurus</name>
    <name type="common">White-tailed prairie dog</name>
    <dbReference type="NCBI Taxonomy" id="99825"/>
</organismHost>
<organismHost>
    <name type="scientific">Cynomys ludovicianus</name>
    <name type="common">Black-tailed prairie dog</name>
    <dbReference type="NCBI Taxonomy" id="45480"/>
</organismHost>
<organismHost>
    <name type="scientific">Cynomys mexicanus</name>
    <name type="common">Mexican prairie dog</name>
    <dbReference type="NCBI Taxonomy" id="99826"/>
</organismHost>
<organismHost>
    <name type="scientific">Cynomys parvidens</name>
    <name type="common">Utah prairie dog</name>
    <dbReference type="NCBI Taxonomy" id="99827"/>
</organismHost>
<organismHost>
    <name type="scientific">Gliridae</name>
    <name type="common">dormice</name>
    <dbReference type="NCBI Taxonomy" id="30650"/>
</organismHost>
<organismHost>
    <name type="scientific">Heliosciurus ruwenzorii</name>
    <name type="common">Ruwenzori sun squirrel</name>
    <dbReference type="NCBI Taxonomy" id="226685"/>
</organismHost>
<organismHost>
    <name type="scientific">Homo sapiens</name>
    <name type="common">Human</name>
    <dbReference type="NCBI Taxonomy" id="9606"/>
</organismHost>
<organismHost>
    <name type="scientific">Mus musculus</name>
    <name type="common">Mouse</name>
    <dbReference type="NCBI Taxonomy" id="10090"/>
</organismHost>
<feature type="chain" id="PRO_0000457505" description="Virion morphogenesis protein OPG132">
    <location>
        <begin position="1"/>
        <end position="372"/>
    </location>
</feature>
<feature type="helix" evidence="3">
    <location>
        <begin position="1"/>
        <end position="23"/>
    </location>
</feature>
<feature type="helix" evidence="3">
    <location>
        <begin position="32"/>
        <end position="49"/>
    </location>
</feature>
<feature type="helix" evidence="3">
    <location>
        <begin position="59"/>
        <end position="65"/>
    </location>
</feature>
<feature type="helix" evidence="4">
    <location>
        <begin position="66"/>
        <end position="68"/>
    </location>
</feature>
<feature type="helix" evidence="3">
    <location>
        <begin position="71"/>
        <end position="73"/>
    </location>
</feature>
<feature type="helix" evidence="3">
    <location>
        <begin position="75"/>
        <end position="77"/>
    </location>
</feature>
<feature type="turn" evidence="3">
    <location>
        <begin position="78"/>
        <end position="80"/>
    </location>
</feature>
<feature type="helix" evidence="3">
    <location>
        <begin position="85"/>
        <end position="90"/>
    </location>
</feature>
<feature type="helix" evidence="3">
    <location>
        <begin position="94"/>
        <end position="117"/>
    </location>
</feature>
<reference key="1">
    <citation type="journal article" date="2013" name="Am. J. Trop. Med. Hyg.">
        <title>Detection of human monkeypox in the republic of the congo following intensive community education.</title>
        <authorList>
            <person name="Reynolds M.G."/>
            <person name="Emerson G.L."/>
            <person name="Pukuta E."/>
            <person name="Karhemere S."/>
            <person name="Muyembe J.J."/>
            <person name="Bikindou A."/>
            <person name="McCollum A.M."/>
            <person name="Moses C."/>
            <person name="Wilkins K."/>
            <person name="Zhao H."/>
            <person name="Damon I.K."/>
            <person name="Karem K.L."/>
            <person name="Li Y."/>
            <person name="Carroll D.S."/>
            <person name="Mombouli J.V."/>
        </authorList>
    </citation>
    <scope>NUCLEOTIDE SEQUENCE [GENOMIC DNA]</scope>
    <source>
        <strain>ROC2010</strain>
    </source>
</reference>
<reference key="2">
    <citation type="journal article" date="2022" name="J. Infect. Dis.">
        <title>Exportation of Monkeypox virus from the African continent.</title>
        <authorList>
            <person name="Mauldin M.R."/>
            <person name="McCollum A.M."/>
            <person name="Nakazawa Y.J."/>
            <person name="Mandra A."/>
            <person name="Whitehouse E.R."/>
            <person name="Davidson W."/>
            <person name="Zhao H."/>
            <person name="Gao J."/>
            <person name="Li Y."/>
            <person name="Doty J."/>
            <person name="Yinka-Ogunleye A."/>
            <person name="Akinpelu A."/>
            <person name="Aruna O."/>
            <person name="Naidoo D."/>
            <person name="Lewandowski K."/>
            <person name="Afrough B."/>
            <person name="Graham V."/>
            <person name="Aarons E."/>
            <person name="Hewson R."/>
            <person name="Vipond R."/>
            <person name="Dunning J."/>
            <person name="Chand M."/>
            <person name="Brown C."/>
            <person name="Cohen-Gihon I."/>
            <person name="Erez N."/>
            <person name="Shifman O."/>
            <person name="Israeli O."/>
            <person name="Sharon M."/>
            <person name="Schwartz E."/>
            <person name="Beth-Din A."/>
            <person name="Zvi A."/>
            <person name="Mak T.M."/>
            <person name="Ng Y.K."/>
            <person name="Cui L."/>
            <person name="Lin R.T.P."/>
            <person name="Olson V.A."/>
            <person name="Brooks T."/>
            <person name="Paran N."/>
            <person name="Ihekweazu C."/>
            <person name="Reynolds M.G."/>
        </authorList>
    </citation>
    <scope>NUCLEOTIDE SEQUENCE [LARGE SCALE GENOMIC DNA]</scope>
    <source>
        <strain>MPXV-M5312_HM12_Rivers</strain>
    </source>
</reference>
<protein>
    <recommendedName>
        <fullName>Virion morphogenesis protein OPG132</fullName>
    </recommendedName>
</protein>
<comment type="function">
    <text evidence="1">Lipid-bound viral membrane assembly protein that plays an essential role in immature virion (IV) to mature virion (MV) transition. Functions in both crescent-shaped viral membranes formation and its enclosure to form immature virions. In addition, participates in targeting mature virion proteins to sites of virion assembly to ensure their correct localization.</text>
</comment>
<comment type="subcellular location">
    <subcellularLocation>
        <location evidence="1">Host cytoplasm</location>
    </subcellularLocation>
    <subcellularLocation>
        <location evidence="1">Virion</location>
    </subcellularLocation>
    <text evidence="1">Predominantly present in the host cytoplasm while only a small amount is present in the virion.</text>
</comment>
<comment type="domain">
    <text evidence="1">The N-terminal domain is not required for crescent formation but is required for virion formation.</text>
</comment>
<comment type="similarity">
    <text evidence="2">Belongs to the orthopoxvirus OPG132 family.</text>
</comment>
<sequence length="372" mass="43181">MDKLRVLYDEFVTISKDNLERETGLSASDVDMDFDLNIFMTLVPVLEKKVCVITPTIEDDKIVTMMKYCSYQSFSFWFLKSGAVVKSVYNKLDDVEKEKFVATFRDMLLNVQTLISLNSMYTRLRQDTEDIVSDSKKIIEIVSHLRASTTENAAYQVLQQNNSFIISTLNKILSDENYLLKIIAVFDSKLISEKETLNEYKQLYTISSESLVYGIRCVSNLDISSVQLSNNKYVLFVKKMLPKIILFQNNDINAQQFANVISKIYTLIYRQLTSNVDVGCLLTDTIESTKTKISIEKIKQTGINNVQSLIKFISDNKKEYKTIISEEYLSKEDRIITILQNIVNEHDIKYDNKLLNMRDLIVTFRERYSYKF</sequence>
<proteinExistence type="evidence at protein level"/>